<keyword id="KW-1185">Reference proteome</keyword>
<keyword id="KW-0732">Signal</keyword>
<reference key="1">
    <citation type="journal article" date="1997" name="Nature">
        <title>The complete genome sequence of the Gram-positive bacterium Bacillus subtilis.</title>
        <authorList>
            <person name="Kunst F."/>
            <person name="Ogasawara N."/>
            <person name="Moszer I."/>
            <person name="Albertini A.M."/>
            <person name="Alloni G."/>
            <person name="Azevedo V."/>
            <person name="Bertero M.G."/>
            <person name="Bessieres P."/>
            <person name="Bolotin A."/>
            <person name="Borchert S."/>
            <person name="Borriss R."/>
            <person name="Boursier L."/>
            <person name="Brans A."/>
            <person name="Braun M."/>
            <person name="Brignell S.C."/>
            <person name="Bron S."/>
            <person name="Brouillet S."/>
            <person name="Bruschi C.V."/>
            <person name="Caldwell B."/>
            <person name="Capuano V."/>
            <person name="Carter N.M."/>
            <person name="Choi S.-K."/>
            <person name="Codani J.-J."/>
            <person name="Connerton I.F."/>
            <person name="Cummings N.J."/>
            <person name="Daniel R.A."/>
            <person name="Denizot F."/>
            <person name="Devine K.M."/>
            <person name="Duesterhoeft A."/>
            <person name="Ehrlich S.D."/>
            <person name="Emmerson P.T."/>
            <person name="Entian K.-D."/>
            <person name="Errington J."/>
            <person name="Fabret C."/>
            <person name="Ferrari E."/>
            <person name="Foulger D."/>
            <person name="Fritz C."/>
            <person name="Fujita M."/>
            <person name="Fujita Y."/>
            <person name="Fuma S."/>
            <person name="Galizzi A."/>
            <person name="Galleron N."/>
            <person name="Ghim S.-Y."/>
            <person name="Glaser P."/>
            <person name="Goffeau A."/>
            <person name="Golightly E.J."/>
            <person name="Grandi G."/>
            <person name="Guiseppi G."/>
            <person name="Guy B.J."/>
            <person name="Haga K."/>
            <person name="Haiech J."/>
            <person name="Harwood C.R."/>
            <person name="Henaut A."/>
            <person name="Hilbert H."/>
            <person name="Holsappel S."/>
            <person name="Hosono S."/>
            <person name="Hullo M.-F."/>
            <person name="Itaya M."/>
            <person name="Jones L.-M."/>
            <person name="Joris B."/>
            <person name="Karamata D."/>
            <person name="Kasahara Y."/>
            <person name="Klaerr-Blanchard M."/>
            <person name="Klein C."/>
            <person name="Kobayashi Y."/>
            <person name="Koetter P."/>
            <person name="Koningstein G."/>
            <person name="Krogh S."/>
            <person name="Kumano M."/>
            <person name="Kurita K."/>
            <person name="Lapidus A."/>
            <person name="Lardinois S."/>
            <person name="Lauber J."/>
            <person name="Lazarevic V."/>
            <person name="Lee S.-M."/>
            <person name="Levine A."/>
            <person name="Liu H."/>
            <person name="Masuda S."/>
            <person name="Mauel C."/>
            <person name="Medigue C."/>
            <person name="Medina N."/>
            <person name="Mellado R.P."/>
            <person name="Mizuno M."/>
            <person name="Moestl D."/>
            <person name="Nakai S."/>
            <person name="Noback M."/>
            <person name="Noone D."/>
            <person name="O'Reilly M."/>
            <person name="Ogawa K."/>
            <person name="Ogiwara A."/>
            <person name="Oudega B."/>
            <person name="Park S.-H."/>
            <person name="Parro V."/>
            <person name="Pohl T.M."/>
            <person name="Portetelle D."/>
            <person name="Porwollik S."/>
            <person name="Prescott A.M."/>
            <person name="Presecan E."/>
            <person name="Pujic P."/>
            <person name="Purnelle B."/>
            <person name="Rapoport G."/>
            <person name="Rey M."/>
            <person name="Reynolds S."/>
            <person name="Rieger M."/>
            <person name="Rivolta C."/>
            <person name="Rocha E."/>
            <person name="Roche B."/>
            <person name="Rose M."/>
            <person name="Sadaie Y."/>
            <person name="Sato T."/>
            <person name="Scanlan E."/>
            <person name="Schleich S."/>
            <person name="Schroeter R."/>
            <person name="Scoffone F."/>
            <person name="Sekiguchi J."/>
            <person name="Sekowska A."/>
            <person name="Seror S.J."/>
            <person name="Serror P."/>
            <person name="Shin B.-S."/>
            <person name="Soldo B."/>
            <person name="Sorokin A."/>
            <person name="Tacconi E."/>
            <person name="Takagi T."/>
            <person name="Takahashi H."/>
            <person name="Takemaru K."/>
            <person name="Takeuchi M."/>
            <person name="Tamakoshi A."/>
            <person name="Tanaka T."/>
            <person name="Terpstra P."/>
            <person name="Tognoni A."/>
            <person name="Tosato V."/>
            <person name="Uchiyama S."/>
            <person name="Vandenbol M."/>
            <person name="Vannier F."/>
            <person name="Vassarotti A."/>
            <person name="Viari A."/>
            <person name="Wambutt R."/>
            <person name="Wedler E."/>
            <person name="Wedler H."/>
            <person name="Weitzenegger T."/>
            <person name="Winters P."/>
            <person name="Wipat A."/>
            <person name="Yamamoto H."/>
            <person name="Yamane K."/>
            <person name="Yasumoto K."/>
            <person name="Yata K."/>
            <person name="Yoshida K."/>
            <person name="Yoshikawa H.-F."/>
            <person name="Zumstein E."/>
            <person name="Yoshikawa H."/>
            <person name="Danchin A."/>
        </authorList>
    </citation>
    <scope>NUCLEOTIDE SEQUENCE [LARGE SCALE GENOMIC DNA]</scope>
    <source>
        <strain>168</strain>
    </source>
</reference>
<accession>C0H426</accession>
<proteinExistence type="inferred from homology"/>
<gene>
    <name type="primary">yozY</name>
    <name type="ordered locus">BSU18908</name>
</gene>
<name>YOZY_BACSU</name>
<protein>
    <recommendedName>
        <fullName>Uncharacterized protein YozY</fullName>
    </recommendedName>
</protein>
<evidence type="ECO:0000255" key="1"/>
<organism>
    <name type="scientific">Bacillus subtilis (strain 168)</name>
    <dbReference type="NCBI Taxonomy" id="224308"/>
    <lineage>
        <taxon>Bacteria</taxon>
        <taxon>Bacillati</taxon>
        <taxon>Bacillota</taxon>
        <taxon>Bacilli</taxon>
        <taxon>Bacillales</taxon>
        <taxon>Bacillaceae</taxon>
        <taxon>Bacillus</taxon>
    </lineage>
</organism>
<feature type="signal peptide" evidence="1">
    <location>
        <begin position="1"/>
        <end position="25"/>
    </location>
</feature>
<feature type="chain" id="PRO_0000384388" description="Uncharacterized protein YozY">
    <location>
        <begin position="26"/>
        <end position="86"/>
    </location>
</feature>
<dbReference type="EMBL" id="AL009126">
    <property type="protein sequence ID" value="CAX52634.1"/>
    <property type="molecule type" value="Genomic_DNA"/>
</dbReference>
<dbReference type="RefSeq" id="WP_010886526.1">
    <property type="nucleotide sequence ID" value="NZ_OZ025638.1"/>
</dbReference>
<dbReference type="RefSeq" id="YP_003097739.1">
    <property type="nucleotide sequence ID" value="NC_000964.3"/>
</dbReference>
<dbReference type="FunCoup" id="C0H426">
    <property type="interactions" value="46"/>
</dbReference>
<dbReference type="STRING" id="224308.BSU18908"/>
<dbReference type="PaxDb" id="224308-BSU18908"/>
<dbReference type="EnsemblBacteria" id="CAX52634">
    <property type="protein sequence ID" value="CAX52634"/>
    <property type="gene ID" value="BSU_18908"/>
</dbReference>
<dbReference type="GeneID" id="8303063"/>
<dbReference type="KEGG" id="bsu:BSU18908"/>
<dbReference type="InParanoid" id="C0H426"/>
<dbReference type="OrthoDB" id="9872617at2"/>
<dbReference type="BioCyc" id="BSUB:BSU18908-MONOMER"/>
<dbReference type="Proteomes" id="UP000001570">
    <property type="component" value="Chromosome"/>
</dbReference>
<sequence length="86" mass="9804">MNLRKILLSSALSLGMLVSAAPVLATSSSSEVIVKSDEYDYDTIYQLSPLPNFKPSIEYNGYTYTLTRYYFDYSIQFYTAIYTKVV</sequence>